<keyword id="KW-0030">Aminoacyl-tRNA synthetase</keyword>
<keyword id="KW-0067">ATP-binding</keyword>
<keyword id="KW-0963">Cytoplasm</keyword>
<keyword id="KW-0436">Ligase</keyword>
<keyword id="KW-0547">Nucleotide-binding</keyword>
<keyword id="KW-0648">Protein biosynthesis</keyword>
<keyword id="KW-1185">Reference proteome</keyword>
<gene>
    <name evidence="1" type="primary">proS</name>
    <name type="ordered locus">PHZ_c1785</name>
</gene>
<sequence>MRLSRYFMPTLREAPSDAQIVSHQLMLRAGMIRQEAAGIYAWLPLGLKVLKKIEQVVREEMDRAGAIEVLMPTLQLADLWRESGRYDDYGEEMLRIKDRHERDLLYGPTAEEVITDIFRAYIKSYKDLPKNLYNIQWKFRDERRPRFGVMRGREFLMKDAYSFDIDEAAARRAYNRMFCAYLNVYARLGLKAIPVRADTGPIGGDLSHEFIILADTGESQVFAHRDLVEMGAPGPDIDWDGDLEPLVQQRTRLYAASDEMHDQARFETEAPEDKRMTARGIEVGHIFYFGEKYSRPMNAKVAGPDGAERFVHMGSYGVGVSRLVGAIIEASHDEAGIVWPDSVAPFGAAVVNLRPGEAAVDAVAEQAYGALQAAGKEPLLDDRDERPGAKFASLDLVGVPWQLIVGPKGVAEGVVEIKRRATGERQTLPLDAALKAITA</sequence>
<name>SYP_PHEZH</name>
<accession>B4RBZ9</accession>
<evidence type="ECO:0000255" key="1">
    <source>
        <dbReference type="HAMAP-Rule" id="MF_01570"/>
    </source>
</evidence>
<dbReference type="EC" id="6.1.1.15" evidence="1"/>
<dbReference type="EMBL" id="CP000747">
    <property type="protein sequence ID" value="ACG78196.1"/>
    <property type="molecule type" value="Genomic_DNA"/>
</dbReference>
<dbReference type="RefSeq" id="WP_012522338.1">
    <property type="nucleotide sequence ID" value="NC_011144.1"/>
</dbReference>
<dbReference type="SMR" id="B4RBZ9"/>
<dbReference type="STRING" id="450851.PHZ_c1785"/>
<dbReference type="KEGG" id="pzu:PHZ_c1785"/>
<dbReference type="eggNOG" id="COG0442">
    <property type="taxonomic scope" value="Bacteria"/>
</dbReference>
<dbReference type="HOGENOM" id="CLU_016739_4_2_5"/>
<dbReference type="OrthoDB" id="9809052at2"/>
<dbReference type="Proteomes" id="UP000001868">
    <property type="component" value="Chromosome"/>
</dbReference>
<dbReference type="GO" id="GO:0005829">
    <property type="term" value="C:cytosol"/>
    <property type="evidence" value="ECO:0007669"/>
    <property type="project" value="TreeGrafter"/>
</dbReference>
<dbReference type="GO" id="GO:0005524">
    <property type="term" value="F:ATP binding"/>
    <property type="evidence" value="ECO:0007669"/>
    <property type="project" value="UniProtKB-UniRule"/>
</dbReference>
<dbReference type="GO" id="GO:0004827">
    <property type="term" value="F:proline-tRNA ligase activity"/>
    <property type="evidence" value="ECO:0007669"/>
    <property type="project" value="UniProtKB-UniRule"/>
</dbReference>
<dbReference type="GO" id="GO:0006433">
    <property type="term" value="P:prolyl-tRNA aminoacylation"/>
    <property type="evidence" value="ECO:0007669"/>
    <property type="project" value="UniProtKB-UniRule"/>
</dbReference>
<dbReference type="CDD" id="cd00861">
    <property type="entry name" value="ProRS_anticodon_short"/>
    <property type="match status" value="1"/>
</dbReference>
<dbReference type="CDD" id="cd00779">
    <property type="entry name" value="ProRS_core_prok"/>
    <property type="match status" value="1"/>
</dbReference>
<dbReference type="FunFam" id="3.30.930.10:FF:000042">
    <property type="entry name" value="probable proline--tRNA ligase, mitochondrial"/>
    <property type="match status" value="1"/>
</dbReference>
<dbReference type="Gene3D" id="3.40.50.800">
    <property type="entry name" value="Anticodon-binding domain"/>
    <property type="match status" value="1"/>
</dbReference>
<dbReference type="Gene3D" id="3.30.930.10">
    <property type="entry name" value="Bira Bifunctional Protein, Domain 2"/>
    <property type="match status" value="1"/>
</dbReference>
<dbReference type="HAMAP" id="MF_01570">
    <property type="entry name" value="Pro_tRNA_synth_type2"/>
    <property type="match status" value="1"/>
</dbReference>
<dbReference type="InterPro" id="IPR002314">
    <property type="entry name" value="aa-tRNA-synt_IIb"/>
</dbReference>
<dbReference type="InterPro" id="IPR006195">
    <property type="entry name" value="aa-tRNA-synth_II"/>
</dbReference>
<dbReference type="InterPro" id="IPR045864">
    <property type="entry name" value="aa-tRNA-synth_II/BPL/LPL"/>
</dbReference>
<dbReference type="InterPro" id="IPR004154">
    <property type="entry name" value="Anticodon-bd"/>
</dbReference>
<dbReference type="InterPro" id="IPR036621">
    <property type="entry name" value="Anticodon-bd_dom_sf"/>
</dbReference>
<dbReference type="InterPro" id="IPR002316">
    <property type="entry name" value="Pro-tRNA-ligase_IIa"/>
</dbReference>
<dbReference type="InterPro" id="IPR004500">
    <property type="entry name" value="Pro-tRNA-synth_IIa_bac-type"/>
</dbReference>
<dbReference type="InterPro" id="IPR050062">
    <property type="entry name" value="Pro-tRNA_synthetase"/>
</dbReference>
<dbReference type="InterPro" id="IPR023716">
    <property type="entry name" value="Prolyl-tRNA_ligase_IIa_type2"/>
</dbReference>
<dbReference type="InterPro" id="IPR044140">
    <property type="entry name" value="ProRS_anticodon_short"/>
</dbReference>
<dbReference type="InterPro" id="IPR033730">
    <property type="entry name" value="ProRS_core_prok"/>
</dbReference>
<dbReference type="NCBIfam" id="NF008979">
    <property type="entry name" value="PRK12325.1"/>
    <property type="match status" value="1"/>
</dbReference>
<dbReference type="NCBIfam" id="TIGR00409">
    <property type="entry name" value="proS_fam_II"/>
    <property type="match status" value="1"/>
</dbReference>
<dbReference type="PANTHER" id="PTHR42753">
    <property type="entry name" value="MITOCHONDRIAL RIBOSOME PROTEIN L39/PROLYL-TRNA LIGASE FAMILY MEMBER"/>
    <property type="match status" value="1"/>
</dbReference>
<dbReference type="PANTHER" id="PTHR42753:SF2">
    <property type="entry name" value="PROLINE--TRNA LIGASE"/>
    <property type="match status" value="1"/>
</dbReference>
<dbReference type="Pfam" id="PF03129">
    <property type="entry name" value="HGTP_anticodon"/>
    <property type="match status" value="1"/>
</dbReference>
<dbReference type="Pfam" id="PF00587">
    <property type="entry name" value="tRNA-synt_2b"/>
    <property type="match status" value="1"/>
</dbReference>
<dbReference type="PRINTS" id="PR01046">
    <property type="entry name" value="TRNASYNTHPRO"/>
</dbReference>
<dbReference type="SUPFAM" id="SSF52954">
    <property type="entry name" value="Class II aaRS ABD-related"/>
    <property type="match status" value="1"/>
</dbReference>
<dbReference type="SUPFAM" id="SSF55681">
    <property type="entry name" value="Class II aaRS and biotin synthetases"/>
    <property type="match status" value="1"/>
</dbReference>
<dbReference type="PROSITE" id="PS50862">
    <property type="entry name" value="AA_TRNA_LIGASE_II"/>
    <property type="match status" value="1"/>
</dbReference>
<reference key="1">
    <citation type="journal article" date="2008" name="BMC Genomics">
        <title>Complete genome of Phenylobacterium zucineum - a novel facultative intracellular bacterium isolated from human erythroleukemia cell line K562.</title>
        <authorList>
            <person name="Luo Y."/>
            <person name="Xu X."/>
            <person name="Ding Z."/>
            <person name="Liu Z."/>
            <person name="Zhang B."/>
            <person name="Yan Z."/>
            <person name="Sun J."/>
            <person name="Hu S."/>
            <person name="Hu X."/>
        </authorList>
    </citation>
    <scope>NUCLEOTIDE SEQUENCE [LARGE SCALE GENOMIC DNA]</scope>
    <source>
        <strain>HLK1</strain>
    </source>
</reference>
<comment type="function">
    <text evidence="1">Catalyzes the attachment of proline to tRNA(Pro) in a two-step reaction: proline is first activated by ATP to form Pro-AMP and then transferred to the acceptor end of tRNA(Pro).</text>
</comment>
<comment type="catalytic activity">
    <reaction evidence="1">
        <text>tRNA(Pro) + L-proline + ATP = L-prolyl-tRNA(Pro) + AMP + diphosphate</text>
        <dbReference type="Rhea" id="RHEA:14305"/>
        <dbReference type="Rhea" id="RHEA-COMP:9700"/>
        <dbReference type="Rhea" id="RHEA-COMP:9702"/>
        <dbReference type="ChEBI" id="CHEBI:30616"/>
        <dbReference type="ChEBI" id="CHEBI:33019"/>
        <dbReference type="ChEBI" id="CHEBI:60039"/>
        <dbReference type="ChEBI" id="CHEBI:78442"/>
        <dbReference type="ChEBI" id="CHEBI:78532"/>
        <dbReference type="ChEBI" id="CHEBI:456215"/>
        <dbReference type="EC" id="6.1.1.15"/>
    </reaction>
</comment>
<comment type="subunit">
    <text evidence="1">Homodimer.</text>
</comment>
<comment type="subcellular location">
    <subcellularLocation>
        <location evidence="1">Cytoplasm</location>
    </subcellularLocation>
</comment>
<comment type="similarity">
    <text evidence="1">Belongs to the class-II aminoacyl-tRNA synthetase family. ProS type 2 subfamily.</text>
</comment>
<feature type="chain" id="PRO_1000199455" description="Proline--tRNA ligase">
    <location>
        <begin position="1"/>
        <end position="439"/>
    </location>
</feature>
<protein>
    <recommendedName>
        <fullName evidence="1">Proline--tRNA ligase</fullName>
        <ecNumber evidence="1">6.1.1.15</ecNumber>
    </recommendedName>
    <alternativeName>
        <fullName evidence="1">Prolyl-tRNA synthetase</fullName>
        <shortName evidence="1">ProRS</shortName>
    </alternativeName>
</protein>
<organism>
    <name type="scientific">Phenylobacterium zucineum (strain HLK1)</name>
    <dbReference type="NCBI Taxonomy" id="450851"/>
    <lineage>
        <taxon>Bacteria</taxon>
        <taxon>Pseudomonadati</taxon>
        <taxon>Pseudomonadota</taxon>
        <taxon>Alphaproteobacteria</taxon>
        <taxon>Caulobacterales</taxon>
        <taxon>Caulobacteraceae</taxon>
        <taxon>Phenylobacterium</taxon>
    </lineage>
</organism>
<proteinExistence type="inferred from homology"/>